<keyword id="KW-0053">Apoptosis</keyword>
<keyword id="KW-0068">Autocatalytic cleavage</keyword>
<keyword id="KW-0963">Cytoplasm</keyword>
<keyword id="KW-0378">Hydrolase</keyword>
<keyword id="KW-0449">Lipoprotein</keyword>
<keyword id="KW-0539">Nucleus</keyword>
<keyword id="KW-0564">Palmitate</keyword>
<keyword id="KW-0597">Phosphoprotein</keyword>
<keyword id="KW-0645">Protease</keyword>
<keyword id="KW-1185">Reference proteome</keyword>
<keyword id="KW-0788">Thiol protease</keyword>
<keyword id="KW-0865">Zymogen</keyword>
<name>CASP6_BOVIN</name>
<evidence type="ECO:0000250" key="1">
    <source>
        <dbReference type="UniProtKB" id="O08738"/>
    </source>
</evidence>
<evidence type="ECO:0000250" key="2">
    <source>
        <dbReference type="UniProtKB" id="P55212"/>
    </source>
</evidence>
<evidence type="ECO:0000256" key="3">
    <source>
        <dbReference type="SAM" id="MobiDB-lite"/>
    </source>
</evidence>
<evidence type="ECO:0000305" key="4"/>
<protein>
    <recommendedName>
        <fullName evidence="4">Caspase-6</fullName>
        <shortName>CASP-6</shortName>
        <ecNumber evidence="2">3.4.22.59</ecNumber>
    </recommendedName>
    <component>
        <recommendedName>
            <fullName evidence="2">Caspase-6 subunit p18</fullName>
        </recommendedName>
    </component>
    <component>
        <recommendedName>
            <fullName evidence="2">Caspase-6 subunit p11</fullName>
        </recommendedName>
    </component>
</protein>
<accession>Q3T0P5</accession>
<proteinExistence type="evidence at transcript level"/>
<feature type="propeptide" id="PRO_0000282876" evidence="2">
    <location>
        <begin position="1"/>
        <end position="23"/>
    </location>
</feature>
<feature type="chain" id="PRO_0000282877" description="Caspase-6 subunit p18" evidence="2">
    <location>
        <begin position="24"/>
        <end position="179"/>
    </location>
</feature>
<feature type="propeptide" id="PRO_0000282878" evidence="2">
    <location>
        <begin position="180"/>
        <end position="193"/>
    </location>
</feature>
<feature type="chain" id="PRO_0000282879" description="Caspase-6 subunit p11" evidence="2">
    <location>
        <begin position="194"/>
        <end position="293"/>
    </location>
</feature>
<feature type="region of interest" description="Disordered" evidence="3">
    <location>
        <begin position="1"/>
        <end position="20"/>
    </location>
</feature>
<feature type="region of interest" description="Tri-arginine exosite" evidence="2">
    <location>
        <begin position="42"/>
        <end position="44"/>
    </location>
</feature>
<feature type="region of interest" description="130's region" evidence="2">
    <location>
        <begin position="125"/>
        <end position="142"/>
    </location>
</feature>
<feature type="active site" evidence="2">
    <location>
        <position position="121"/>
    </location>
</feature>
<feature type="active site" evidence="2">
    <location>
        <position position="163"/>
    </location>
</feature>
<feature type="modified residue" description="Phosphoserine" evidence="1">
    <location>
        <position position="79"/>
    </location>
</feature>
<feature type="modified residue" description="Phosphoserine" evidence="2">
    <location>
        <position position="257"/>
    </location>
</feature>
<feature type="lipid moiety-binding region" description="S-palmitoyl cysteine" evidence="2">
    <location>
        <position position="264"/>
    </location>
</feature>
<feature type="lipid moiety-binding region" description="S-palmitoyl cysteine" evidence="2">
    <location>
        <position position="277"/>
    </location>
</feature>
<sequence length="293" mass="33350">MSSEPPPRRARGPGEEQNMTEIDAFPRREIFDPTEKYKMDHKRRGIALIFNHERFFWHLTLPNRPGTSADRDNLRRRFSDLGFEVKCFDDLRAEELLLKIHEASTASHVDADCFLCVFLSHGEGNHIYAYDAKIEIQTLTGLFKGDKCQSLVGKPKIFIIQACRGSQHDVPVIPLDVVDHRTDTPDANLTQVDAASVYTLPAGADFLMCYSVAEGYYSHRETVNGSWYIQDLCEMLGKFGSSLEFTELLTLVNRKVSQRRVDFCRDPNAIGKKQVPCFASMLTKKLHFSPKSK</sequence>
<organism>
    <name type="scientific">Bos taurus</name>
    <name type="common">Bovine</name>
    <dbReference type="NCBI Taxonomy" id="9913"/>
    <lineage>
        <taxon>Eukaryota</taxon>
        <taxon>Metazoa</taxon>
        <taxon>Chordata</taxon>
        <taxon>Craniata</taxon>
        <taxon>Vertebrata</taxon>
        <taxon>Euteleostomi</taxon>
        <taxon>Mammalia</taxon>
        <taxon>Eutheria</taxon>
        <taxon>Laurasiatheria</taxon>
        <taxon>Artiodactyla</taxon>
        <taxon>Ruminantia</taxon>
        <taxon>Pecora</taxon>
        <taxon>Bovidae</taxon>
        <taxon>Bovinae</taxon>
        <taxon>Bos</taxon>
    </lineage>
</organism>
<gene>
    <name evidence="2" type="primary">CASP6</name>
</gene>
<comment type="function">
    <text evidence="1 2">Cysteine protease that plays essential roles in programmed cell death, axonal degeneration, development and innate immunity (By similarity). Acts as a non-canonical executioner caspase during apoptosis: localizes in the nucleus and cleaves the nuclear structural protein NUMA1 and lamin A/LMNA thereby inducing nuclear shrinkage and fragmentation. Lamin-A/LMNA cleavage is required for chromatin condensation and nuclear disassembly during apoptotic execution (By similarity). Acts as a regulator of liver damage by promoting hepatocyte apoptosis: in absence of phosphorylation by AMP-activated protein kinase (AMPK), catalyzes cleavage of BID, leading to cytochrome c release, thereby participating in nonalcoholic steatohepatitis. Cleaves PARK7/DJ-1 in cells undergoing apoptosis (By similarity). Involved in intrinsic apoptosis by mediating cleavage of RIPK1. Furthermore, cleaves many transcription factors such as NF-kappa-B and cAMP response element-binding protein/CREBBP (By similarity). Cleaves phospholipid scramblase proteins XKR4 and XKR9. In addition to apoptosis, involved in different forms of programmed cell death. Plays an essential role in defense against viruses by acting as a central mediator of the ZBP1-mediated pyroptosis, apoptosis, and necroptosis (PANoptosis), independently of its cysteine protease activity. PANoptosis is a unique inflammatory programmed cell death, which provides a molecular scaffold that allows the interactions and activation of machinery required for inflammasome/pyroptosis, apoptosis and necroptosis. Mechanistically, interacts with RIPK3 and enhances the interaction between RIPK3 and ZBP1, leading to ZBP1-mediated inflammasome activation and cell death. Plays an essential role in axon degeneration during axon pruning which is the remodeling of axons during neurogenesis but not apoptosis. Regulates B-cell programs both during early development and after antigen stimulation (By similarity).</text>
</comment>
<comment type="catalytic activity">
    <reaction evidence="2">
        <text>Strict requirement for Asp at position P1 and has a preferred cleavage sequence of Val-Glu-His-Asp-|-.</text>
        <dbReference type="EC" id="3.4.22.59"/>
    </reaction>
</comment>
<comment type="activity regulation">
    <text evidence="2">During activation, the N-terminal disordered prodomain is removed by cleavage. Concomitantly, double cleavage gives rise to a large 18-kDa and a small 11-kDa subunit. The two large and two small subunits then assemble to form the active CASP6 complex. Can be cleaved and activated by different caspases, depending on the context. Cleaved and activated by caspase-8 (CASP8) and subsequently by caspase-3 (CASP3). Can also undergo autoactivation by mediating autocleavage at Asp-179 and Asp-193, while it is not able to cleave its N-terminal disordered prodomain. Intramolecular cleavage at Asp-193 is a prerequisite for CASP6 self-activation. Cleaved and activated by CASP1 in neurons, possibly in the context of inflammation. Phosphorylation at Ser-257 inhibits autocleavage, preventing caspase activation.</text>
</comment>
<comment type="subunit">
    <text evidence="2">Heterotetramer that consists of two anti-parallel arranged heterodimers, each one formed by a 18 kDa (p18) and a 11 kDa (p11) subunits. Interacts with BIRC6/bruce. Interacts with RIPK3.</text>
</comment>
<comment type="subunit">
    <molecule>Caspase-6 subunit p18</molecule>
    <text evidence="2">Heterotetramer that consists of two anti-parallel arranged heterodimers, each one formed by a 18 kDa (Caspase-6 subunit p18) and a 11 kDa (Caspase-6 subunit p11) subunit.</text>
</comment>
<comment type="subunit">
    <molecule>Caspase-6 subunit p11</molecule>
    <text evidence="2">Heterotetramer that consists of two anti-parallel arranged heterodimers, each one formed by a 18 kDa (Caspase-6 subunit p18) and a 11 kDa (Caspase-6 subunit p11) subunit.</text>
</comment>
<comment type="subcellular location">
    <subcellularLocation>
        <location evidence="2">Cytoplasm</location>
    </subcellularLocation>
    <subcellularLocation>
        <location evidence="2">Nucleus</location>
    </subcellularLocation>
</comment>
<comment type="domain">
    <text evidence="2">The N-terminal disordered prodomain is required to prevent self-activation.</text>
</comment>
<comment type="domain">
    <text evidence="2">The Tri-arginine exosite is required to recruit substrates for hydrolysis.</text>
</comment>
<comment type="domain">
    <text evidence="2">Undergoes helix-strand structural transitions upon substrate-binding: the 130's region interconverts between an inactive helical state and the canonically active strand state. Other caspases rest constitutively in the strand conformation before and after substrate-binding.</text>
</comment>
<comment type="PTM">
    <text evidence="2">Phosphorylated by NUAK1; phosphorylation inhibits self-activation. Phosphorylation at Ser-257 by AMP-activated protein kinase (PRKAA1 or PRKAA2) inhibits autocleavage, preventing caspase activation, thereby preventing hepatocyte apoptosis.</text>
</comment>
<comment type="PTM">
    <text evidence="2">Palmitoylation by ZDHHC17 blocks dimerization and subsequent activation, leading to inhibit the cysteine protease activity.</text>
</comment>
<comment type="PTM">
    <text evidence="2">Can be cleaved and activated by different caspases, depending on the context. Cleaved and activated by caspase-8 (CASP8) and subsequently by caspase-3 (CASP3). Can also undergo autoactivation by mediating autocleavage at Asp-179 and Asp-193, while it is not able to cleave its N-terminal disordered prodomain. Cleaved and activated by CASP1, possibly in the context of inflammation.</text>
</comment>
<comment type="similarity">
    <text evidence="4">Belongs to the peptidase C14A family.</text>
</comment>
<reference key="1">
    <citation type="submission" date="2005-08" db="EMBL/GenBank/DDBJ databases">
        <authorList>
            <consortium name="NIH - Mammalian Gene Collection (MGC) project"/>
        </authorList>
    </citation>
    <scope>NUCLEOTIDE SEQUENCE [LARGE SCALE MRNA]</scope>
    <source>
        <strain>Crossbred X Angus</strain>
        <tissue>Ileum</tissue>
    </source>
</reference>
<dbReference type="EC" id="3.4.22.59" evidence="2"/>
<dbReference type="EMBL" id="BC102309">
    <property type="protein sequence ID" value="AAI02310.1"/>
    <property type="molecule type" value="mRNA"/>
</dbReference>
<dbReference type="RefSeq" id="NP_001030496.1">
    <property type="nucleotide sequence ID" value="NM_001035419.2"/>
</dbReference>
<dbReference type="SMR" id="Q3T0P5"/>
<dbReference type="FunCoup" id="Q3T0P5">
    <property type="interactions" value="697"/>
</dbReference>
<dbReference type="STRING" id="9913.ENSBTAP00000016642"/>
<dbReference type="MEROPS" id="C14.005"/>
<dbReference type="PaxDb" id="9913-ENSBTAP00000016642"/>
<dbReference type="GeneID" id="538409"/>
<dbReference type="KEGG" id="bta:538409"/>
<dbReference type="CTD" id="839"/>
<dbReference type="eggNOG" id="KOG3573">
    <property type="taxonomic scope" value="Eukaryota"/>
</dbReference>
<dbReference type="InParanoid" id="Q3T0P5"/>
<dbReference type="OrthoDB" id="6116485at2759"/>
<dbReference type="Proteomes" id="UP000009136">
    <property type="component" value="Unplaced"/>
</dbReference>
<dbReference type="GO" id="GO:0005737">
    <property type="term" value="C:cytoplasm"/>
    <property type="evidence" value="ECO:0000250"/>
    <property type="project" value="UniProtKB"/>
</dbReference>
<dbReference type="GO" id="GO:0005634">
    <property type="term" value="C:nucleus"/>
    <property type="evidence" value="ECO:0000250"/>
    <property type="project" value="UniProtKB"/>
</dbReference>
<dbReference type="GO" id="GO:0004197">
    <property type="term" value="F:cysteine-type endopeptidase activity"/>
    <property type="evidence" value="ECO:0000250"/>
    <property type="project" value="UniProtKB"/>
</dbReference>
<dbReference type="GO" id="GO:0002218">
    <property type="term" value="P:activation of innate immune response"/>
    <property type="evidence" value="ECO:0000250"/>
    <property type="project" value="UniProtKB"/>
</dbReference>
<dbReference type="GO" id="GO:0006915">
    <property type="term" value="P:apoptotic process"/>
    <property type="evidence" value="ECO:0000318"/>
    <property type="project" value="GO_Central"/>
</dbReference>
<dbReference type="GO" id="GO:0097284">
    <property type="term" value="P:hepatocyte apoptotic process"/>
    <property type="evidence" value="ECO:0000250"/>
    <property type="project" value="UniProtKB"/>
</dbReference>
<dbReference type="GO" id="GO:0072332">
    <property type="term" value="P:intrinsic apoptotic signaling pathway by p53 class mediator"/>
    <property type="evidence" value="ECO:0000250"/>
    <property type="project" value="UniProtKB"/>
</dbReference>
<dbReference type="GO" id="GO:0043065">
    <property type="term" value="P:positive regulation of apoptotic process"/>
    <property type="evidence" value="ECO:0000250"/>
    <property type="project" value="UniProtKB"/>
</dbReference>
<dbReference type="GO" id="GO:0060545">
    <property type="term" value="P:positive regulation of necroptotic process"/>
    <property type="evidence" value="ECO:0000250"/>
    <property type="project" value="UniProtKB"/>
</dbReference>
<dbReference type="GO" id="GO:0043525">
    <property type="term" value="P:positive regulation of neuron apoptotic process"/>
    <property type="evidence" value="ECO:0000318"/>
    <property type="project" value="GO_Central"/>
</dbReference>
<dbReference type="GO" id="GO:0016540">
    <property type="term" value="P:protein autoprocessing"/>
    <property type="evidence" value="ECO:0000250"/>
    <property type="project" value="UniProtKB"/>
</dbReference>
<dbReference type="GO" id="GO:0070269">
    <property type="term" value="P:pyroptotic inflammatory response"/>
    <property type="evidence" value="ECO:0000250"/>
    <property type="project" value="UniProtKB"/>
</dbReference>
<dbReference type="CDD" id="cd00032">
    <property type="entry name" value="CASc"/>
    <property type="match status" value="1"/>
</dbReference>
<dbReference type="FunFam" id="3.40.50.1460:FF:000001">
    <property type="entry name" value="Caspase-3 preproprotein"/>
    <property type="match status" value="1"/>
</dbReference>
<dbReference type="Gene3D" id="3.40.50.1460">
    <property type="match status" value="1"/>
</dbReference>
<dbReference type="InterPro" id="IPR029030">
    <property type="entry name" value="Caspase-like_dom_sf"/>
</dbReference>
<dbReference type="InterPro" id="IPR033139">
    <property type="entry name" value="Caspase_cys_AS"/>
</dbReference>
<dbReference type="InterPro" id="IPR016129">
    <property type="entry name" value="Caspase_his_AS"/>
</dbReference>
<dbReference type="InterPro" id="IPR002398">
    <property type="entry name" value="Pept_C14"/>
</dbReference>
<dbReference type="InterPro" id="IPR011600">
    <property type="entry name" value="Pept_C14_caspase"/>
</dbReference>
<dbReference type="InterPro" id="IPR002138">
    <property type="entry name" value="Pept_C14_p10"/>
</dbReference>
<dbReference type="InterPro" id="IPR001309">
    <property type="entry name" value="Pept_C14_p20"/>
</dbReference>
<dbReference type="InterPro" id="IPR015917">
    <property type="entry name" value="Pept_C14A"/>
</dbReference>
<dbReference type="PANTHER" id="PTHR10454">
    <property type="entry name" value="CASPASE"/>
    <property type="match status" value="1"/>
</dbReference>
<dbReference type="PANTHER" id="PTHR10454:SF206">
    <property type="entry name" value="CASPASE-6"/>
    <property type="match status" value="1"/>
</dbReference>
<dbReference type="Pfam" id="PF00656">
    <property type="entry name" value="Peptidase_C14"/>
    <property type="match status" value="1"/>
</dbReference>
<dbReference type="PRINTS" id="PR00376">
    <property type="entry name" value="IL1BCENZYME"/>
</dbReference>
<dbReference type="SMART" id="SM00115">
    <property type="entry name" value="CASc"/>
    <property type="match status" value="1"/>
</dbReference>
<dbReference type="SUPFAM" id="SSF52129">
    <property type="entry name" value="Caspase-like"/>
    <property type="match status" value="1"/>
</dbReference>
<dbReference type="PROSITE" id="PS01122">
    <property type="entry name" value="CASPASE_CYS"/>
    <property type="match status" value="1"/>
</dbReference>
<dbReference type="PROSITE" id="PS01121">
    <property type="entry name" value="CASPASE_HIS"/>
    <property type="match status" value="1"/>
</dbReference>
<dbReference type="PROSITE" id="PS50207">
    <property type="entry name" value="CASPASE_P10"/>
    <property type="match status" value="1"/>
</dbReference>
<dbReference type="PROSITE" id="PS50208">
    <property type="entry name" value="CASPASE_P20"/>
    <property type="match status" value="1"/>
</dbReference>